<evidence type="ECO:0000255" key="1">
    <source>
        <dbReference type="HAMAP-Rule" id="MF_01201"/>
    </source>
</evidence>
<gene>
    <name type="primary">alr</name>
    <name type="ordered locus">LMOf2365_0905</name>
</gene>
<proteinExistence type="inferred from homology"/>
<reference key="1">
    <citation type="journal article" date="2004" name="Nucleic Acids Res.">
        <title>Whole genome comparisons of serotype 4b and 1/2a strains of the food-borne pathogen Listeria monocytogenes reveal new insights into the core genome components of this species.</title>
        <authorList>
            <person name="Nelson K.E."/>
            <person name="Fouts D.E."/>
            <person name="Mongodin E.F."/>
            <person name="Ravel J."/>
            <person name="DeBoy R.T."/>
            <person name="Kolonay J.F."/>
            <person name="Rasko D.A."/>
            <person name="Angiuoli S.V."/>
            <person name="Gill S.R."/>
            <person name="Paulsen I.T."/>
            <person name="Peterson J.D."/>
            <person name="White O."/>
            <person name="Nelson W.C."/>
            <person name="Nierman W.C."/>
            <person name="Beanan M.J."/>
            <person name="Brinkac L.M."/>
            <person name="Daugherty S.C."/>
            <person name="Dodson R.J."/>
            <person name="Durkin A.S."/>
            <person name="Madupu R."/>
            <person name="Haft D.H."/>
            <person name="Selengut J."/>
            <person name="Van Aken S.E."/>
            <person name="Khouri H.M."/>
            <person name="Fedorova N."/>
            <person name="Forberger H.A."/>
            <person name="Tran B."/>
            <person name="Kathariou S."/>
            <person name="Wonderling L.D."/>
            <person name="Uhlich G.A."/>
            <person name="Bayles D.O."/>
            <person name="Luchansky J.B."/>
            <person name="Fraser C.M."/>
        </authorList>
    </citation>
    <scope>NUCLEOTIDE SEQUENCE [LARGE SCALE GENOMIC DNA]</scope>
    <source>
        <strain>F2365</strain>
    </source>
</reference>
<name>ALR_LISMF</name>
<feature type="chain" id="PRO_0000114533" description="Alanine racemase">
    <location>
        <begin position="1"/>
        <end position="368"/>
    </location>
</feature>
<feature type="active site" description="Proton acceptor; specific for D-alanine" evidence="1">
    <location>
        <position position="40"/>
    </location>
</feature>
<feature type="active site" description="Proton acceptor; specific for L-alanine" evidence="1">
    <location>
        <position position="263"/>
    </location>
</feature>
<feature type="binding site" evidence="1">
    <location>
        <position position="134"/>
    </location>
    <ligand>
        <name>substrate</name>
    </ligand>
</feature>
<feature type="binding site" evidence="1">
    <location>
        <position position="310"/>
    </location>
    <ligand>
        <name>substrate</name>
    </ligand>
</feature>
<feature type="modified residue" description="N6-(pyridoxal phosphate)lysine" evidence="1">
    <location>
        <position position="40"/>
    </location>
</feature>
<keyword id="KW-0413">Isomerase</keyword>
<keyword id="KW-0663">Pyridoxal phosphate</keyword>
<dbReference type="EC" id="5.1.1.1" evidence="1"/>
<dbReference type="EMBL" id="AE017262">
    <property type="protein sequence ID" value="AAT03685.1"/>
    <property type="molecule type" value="Genomic_DNA"/>
</dbReference>
<dbReference type="RefSeq" id="WP_003724815.1">
    <property type="nucleotide sequence ID" value="NC_002973.6"/>
</dbReference>
<dbReference type="SMR" id="Q721S9"/>
<dbReference type="KEGG" id="lmf:LMOf2365_0905"/>
<dbReference type="HOGENOM" id="CLU_028393_2_1_9"/>
<dbReference type="UniPathway" id="UPA00042">
    <property type="reaction ID" value="UER00497"/>
</dbReference>
<dbReference type="GO" id="GO:0005829">
    <property type="term" value="C:cytosol"/>
    <property type="evidence" value="ECO:0007669"/>
    <property type="project" value="TreeGrafter"/>
</dbReference>
<dbReference type="GO" id="GO:0008784">
    <property type="term" value="F:alanine racemase activity"/>
    <property type="evidence" value="ECO:0007669"/>
    <property type="project" value="UniProtKB-UniRule"/>
</dbReference>
<dbReference type="GO" id="GO:0030170">
    <property type="term" value="F:pyridoxal phosphate binding"/>
    <property type="evidence" value="ECO:0007669"/>
    <property type="project" value="UniProtKB-UniRule"/>
</dbReference>
<dbReference type="GO" id="GO:0030632">
    <property type="term" value="P:D-alanine biosynthetic process"/>
    <property type="evidence" value="ECO:0007669"/>
    <property type="project" value="UniProtKB-UniRule"/>
</dbReference>
<dbReference type="GO" id="GO:0009252">
    <property type="term" value="P:peptidoglycan biosynthetic process"/>
    <property type="evidence" value="ECO:0007669"/>
    <property type="project" value="TreeGrafter"/>
</dbReference>
<dbReference type="CDD" id="cd00430">
    <property type="entry name" value="PLPDE_III_AR"/>
    <property type="match status" value="1"/>
</dbReference>
<dbReference type="FunFam" id="2.40.37.10:FF:000006">
    <property type="entry name" value="Alanine racemase"/>
    <property type="match status" value="1"/>
</dbReference>
<dbReference type="FunFam" id="3.20.20.10:FF:000002">
    <property type="entry name" value="Alanine racemase"/>
    <property type="match status" value="1"/>
</dbReference>
<dbReference type="Gene3D" id="3.20.20.10">
    <property type="entry name" value="Alanine racemase"/>
    <property type="match status" value="1"/>
</dbReference>
<dbReference type="Gene3D" id="2.40.37.10">
    <property type="entry name" value="Lyase, Ornithine Decarboxylase, Chain A, domain 1"/>
    <property type="match status" value="1"/>
</dbReference>
<dbReference type="HAMAP" id="MF_01201">
    <property type="entry name" value="Ala_racemase"/>
    <property type="match status" value="1"/>
</dbReference>
<dbReference type="InterPro" id="IPR000821">
    <property type="entry name" value="Ala_racemase"/>
</dbReference>
<dbReference type="InterPro" id="IPR009006">
    <property type="entry name" value="Ala_racemase/Decarboxylase_C"/>
</dbReference>
<dbReference type="InterPro" id="IPR011079">
    <property type="entry name" value="Ala_racemase_C"/>
</dbReference>
<dbReference type="InterPro" id="IPR001608">
    <property type="entry name" value="Ala_racemase_N"/>
</dbReference>
<dbReference type="InterPro" id="IPR020622">
    <property type="entry name" value="Ala_racemase_pyridoxalP-BS"/>
</dbReference>
<dbReference type="InterPro" id="IPR029066">
    <property type="entry name" value="PLP-binding_barrel"/>
</dbReference>
<dbReference type="NCBIfam" id="TIGR00492">
    <property type="entry name" value="alr"/>
    <property type="match status" value="1"/>
</dbReference>
<dbReference type="PANTHER" id="PTHR30511">
    <property type="entry name" value="ALANINE RACEMASE"/>
    <property type="match status" value="1"/>
</dbReference>
<dbReference type="PANTHER" id="PTHR30511:SF0">
    <property type="entry name" value="ALANINE RACEMASE, CATABOLIC-RELATED"/>
    <property type="match status" value="1"/>
</dbReference>
<dbReference type="Pfam" id="PF00842">
    <property type="entry name" value="Ala_racemase_C"/>
    <property type="match status" value="1"/>
</dbReference>
<dbReference type="Pfam" id="PF01168">
    <property type="entry name" value="Ala_racemase_N"/>
    <property type="match status" value="1"/>
</dbReference>
<dbReference type="PRINTS" id="PR00992">
    <property type="entry name" value="ALARACEMASE"/>
</dbReference>
<dbReference type="SMART" id="SM01005">
    <property type="entry name" value="Ala_racemase_C"/>
    <property type="match status" value="1"/>
</dbReference>
<dbReference type="SUPFAM" id="SSF50621">
    <property type="entry name" value="Alanine racemase C-terminal domain-like"/>
    <property type="match status" value="1"/>
</dbReference>
<dbReference type="SUPFAM" id="SSF51419">
    <property type="entry name" value="PLP-binding barrel"/>
    <property type="match status" value="1"/>
</dbReference>
<dbReference type="PROSITE" id="PS00395">
    <property type="entry name" value="ALANINE_RACEMASE"/>
    <property type="match status" value="1"/>
</dbReference>
<protein>
    <recommendedName>
        <fullName evidence="1">Alanine racemase</fullName>
        <ecNumber evidence="1">5.1.1.1</ecNumber>
    </recommendedName>
</protein>
<sequence length="368" mass="41068">MVTGWHRPTWIEIDRAAIRENIKNEQNKLPENVDLWAVVKANAYGHGIIEVARTAKEAGAKGFCVAILDEALALREAGFQDDFILVLGATRKEDANLAAKNHISLTVFREDWLEELTLEAPLRIHLKVDSGMGRLGIRTTDEARRIETTIAKDNQLQLEGIYTHFATADQLETSYFEQQLAKFQTILTSLKNRPTYVHTANSAASLLQPQIGFDAIRFGISMYGLTPSTEIKTSLPFELKPALALYTEMVHVKELAPGDSVSYGATYTATEREWVATLPIGYADGLIRHYSGFHVLVDGELAPIIGRVCMDQTIIKLPREFQTGSKVTIIGTDHGNTITADDAAHYLDTINYEVTCLLNERIPRKYIH</sequence>
<accession>Q721S9</accession>
<organism>
    <name type="scientific">Listeria monocytogenes serotype 4b (strain F2365)</name>
    <dbReference type="NCBI Taxonomy" id="265669"/>
    <lineage>
        <taxon>Bacteria</taxon>
        <taxon>Bacillati</taxon>
        <taxon>Bacillota</taxon>
        <taxon>Bacilli</taxon>
        <taxon>Bacillales</taxon>
        <taxon>Listeriaceae</taxon>
        <taxon>Listeria</taxon>
    </lineage>
</organism>
<comment type="function">
    <text evidence="1">Catalyzes the interconversion of L-alanine and D-alanine. May also act on other amino acids.</text>
</comment>
<comment type="catalytic activity">
    <reaction evidence="1">
        <text>L-alanine = D-alanine</text>
        <dbReference type="Rhea" id="RHEA:20249"/>
        <dbReference type="ChEBI" id="CHEBI:57416"/>
        <dbReference type="ChEBI" id="CHEBI:57972"/>
        <dbReference type="EC" id="5.1.1.1"/>
    </reaction>
</comment>
<comment type="cofactor">
    <cofactor evidence="1">
        <name>pyridoxal 5'-phosphate</name>
        <dbReference type="ChEBI" id="CHEBI:597326"/>
    </cofactor>
</comment>
<comment type="pathway">
    <text evidence="1">Amino-acid biosynthesis; D-alanine biosynthesis; D-alanine from L-alanine: step 1/1.</text>
</comment>
<comment type="similarity">
    <text evidence="1">Belongs to the alanine racemase family.</text>
</comment>